<feature type="chain" id="PRO_0000078776" description="RNA-directed RNA polymerase catalytic subunit">
    <location>
        <begin position="1"/>
        <end position="754"/>
    </location>
</feature>
<feature type="domain" description="RdRp catalytic" evidence="1">
    <location>
        <begin position="288"/>
        <end position="484"/>
    </location>
</feature>
<feature type="region of interest" description="Promoter-binding site" evidence="1">
    <location>
        <begin position="251"/>
        <end position="258"/>
    </location>
</feature>
<feature type="short sequence motif" description="Nuclear localization signal" evidence="1">
    <location>
        <begin position="189"/>
        <end position="197"/>
    </location>
</feature>
<feature type="short sequence motif" description="Nuclear localization signal" evidence="1">
    <location>
        <begin position="205"/>
        <end position="218"/>
    </location>
</feature>
<comment type="function">
    <text evidence="1">RNA-dependent RNA polymerase which is responsible for replication and transcription of virus RNA segments. The transcription of viral mRNAs occurs by a unique mechanism called cap-snatching. 5' methylated caps of cellular mRNAs are cleaved after 10-13 nucleotides by PA. In turn, these short capped RNAs are used as primers by PB1 for transcription of viral mRNAs. During virus replication, PB1 initiates RNA synthesis and copy vRNA into complementary RNA (cRNA) which in turn serves as a template for the production of more vRNAs.</text>
</comment>
<comment type="catalytic activity">
    <reaction evidence="1">
        <text>RNA(n) + a ribonucleoside 5'-triphosphate = RNA(n+1) + diphosphate</text>
        <dbReference type="Rhea" id="RHEA:21248"/>
        <dbReference type="Rhea" id="RHEA-COMP:14527"/>
        <dbReference type="Rhea" id="RHEA-COMP:17342"/>
        <dbReference type="ChEBI" id="CHEBI:33019"/>
        <dbReference type="ChEBI" id="CHEBI:61557"/>
        <dbReference type="ChEBI" id="CHEBI:140395"/>
        <dbReference type="EC" id="2.7.7.48"/>
    </reaction>
</comment>
<comment type="subunit">
    <text evidence="1">Influenza RNA polymerase is composed of three subunits: PB1, PB2 and PA. Interacts (via N-terminus) with PA (via C-terminus). Interacts (via C-terminus) with PB2 (via N-terminus); this interaction is essential for transcription initiation.</text>
</comment>
<comment type="subcellular location">
    <subcellularLocation>
        <location evidence="1">Host nucleus</location>
    </subcellularLocation>
    <subcellularLocation>
        <location evidence="1">Host cytoplasm</location>
    </subcellularLocation>
</comment>
<comment type="PTM">
    <text evidence="1">Phosphorylated by host PRKCA.</text>
</comment>
<comment type="similarity">
    <text evidence="1">Belongs to the influenza viruses polymerase PB1 family.</text>
</comment>
<sequence length="754" mass="85984">MEINPYLMFLNNDVTSLISTTYPYTGPPPMSHGSSTKYTLETIKRTYDYSRTSVEKTSKVFNIPRRKFCNCLEDKDDLVKPTGNVDISSLLGLAEMMEKRMGEGFFKHCVMEAETEILKMHFSRLTEGRQTYDWTSERNMPAATALQLTVDAIKETEGPFKGTTMLEYCNKMIEMLDWKEVKFRKVKTMVRREKDKRSGKEIKTKVPVMGIDSIKHDEFLIRALTINTMAKDGERGKLQRRAIATPGMIVRPFSKIVETVAQKICEKLKESGLPVGGNEKKAKLKTTVTSLNARMNSDQFAVNITGDNSKWNECQQPEAYLALLAYITKDSSDLMKDLCSVAPVLFCNKFVKLGQGIRLSNKRKTKEVIIKAEKMGKYKNLMREEYKNLFEPLEKYIQKDVCFLPGGMLMGMFNMLSTVLGVSTLCYMDEELKAKGCFWTGLQSSDDFVLFAVASNWSNIHWTIRRFNAVCKLIGINMSLEKSYGSLPELFEFTSMFFDGEFVSNLAMELPAFTTAGVNEGVDFTAAMSIIKTNMINNSLSPSTALMALRICLQEFRATYRVHPWDSKVKGGRMKIINEFIKTIESKDGLLIADGGKLMNNISTLHIPEEVLKFEKMDEQYRNRVFNPKNPFTNFDKTIDIFRAHGPIRVEENEAVVSTHSFRTRANRTLLNTDMRAMMAEEKRYQMVCDIFKSVFESADINPPIGAMSIGEAIEEKLLERAKMKRDIGAIEDSEYEEIKDIIRDAKKARIESR</sequence>
<proteinExistence type="inferred from homology"/>
<gene>
    <name evidence="1" type="primary">PB1</name>
</gene>
<accession>P19703</accession>
<organismHost>
    <name type="scientific">Homo sapiens</name>
    <name type="common">Human</name>
    <dbReference type="NCBI Taxonomy" id="9606"/>
</organismHost>
<organismHost>
    <name type="scientific">Sus scrofa</name>
    <name type="common">Pig</name>
    <dbReference type="NCBI Taxonomy" id="9823"/>
</organismHost>
<evidence type="ECO:0000255" key="1">
    <source>
        <dbReference type="HAMAP-Rule" id="MF_04065"/>
    </source>
</evidence>
<protein>
    <recommendedName>
        <fullName evidence="1">RNA-directed RNA polymerase catalytic subunit</fullName>
        <ecNumber evidence="1">2.7.7.48</ecNumber>
    </recommendedName>
    <alternativeName>
        <fullName evidence="1">Polymerase basic protein 1</fullName>
        <shortName evidence="1">PB1</shortName>
    </alternativeName>
    <alternativeName>
        <fullName evidence="1">RNA-directed RNA polymerase subunit P1</fullName>
    </alternativeName>
</protein>
<organism>
    <name type="scientific">Influenza C virus (strain C/JJ/1950)</name>
    <dbReference type="NCBI Taxonomy" id="11560"/>
    <lineage>
        <taxon>Viruses</taxon>
        <taxon>Riboviria</taxon>
        <taxon>Orthornavirae</taxon>
        <taxon>Negarnaviricota</taxon>
        <taxon>Polyploviricotina</taxon>
        <taxon>Insthoviricetes</taxon>
        <taxon>Articulavirales</taxon>
        <taxon>Orthomyxoviridae</taxon>
        <taxon>Gammainfluenzavirus</taxon>
        <taxon>Gammainfluenzavirus influenzae</taxon>
        <taxon>Influenza C virus</taxon>
    </lineage>
</organism>
<reference key="1">
    <citation type="journal article" date="1989" name="Virology">
        <title>Comparison of the three large polymerase proteins of influenza A, B, and C viruses.</title>
        <authorList>
            <person name="Yamashita M."/>
            <person name="Krystal M."/>
            <person name="Palese P."/>
        </authorList>
    </citation>
    <scope>NUCLEOTIDE SEQUENCE [GENOMIC RNA]</scope>
</reference>
<dbReference type="EC" id="2.7.7.48" evidence="1"/>
<dbReference type="EMBL" id="M28060">
    <property type="protein sequence ID" value="AAA43814.1"/>
    <property type="molecule type" value="Genomic_RNA"/>
</dbReference>
<dbReference type="PIR" id="B34225">
    <property type="entry name" value="P1IV50"/>
</dbReference>
<dbReference type="SMR" id="P19703"/>
<dbReference type="GO" id="GO:0030430">
    <property type="term" value="C:host cell cytoplasm"/>
    <property type="evidence" value="ECO:0007669"/>
    <property type="project" value="UniProtKB-SubCell"/>
</dbReference>
<dbReference type="GO" id="GO:0042025">
    <property type="term" value="C:host cell nucleus"/>
    <property type="evidence" value="ECO:0007669"/>
    <property type="project" value="UniProtKB-SubCell"/>
</dbReference>
<dbReference type="GO" id="GO:0000166">
    <property type="term" value="F:nucleotide binding"/>
    <property type="evidence" value="ECO:0007669"/>
    <property type="project" value="UniProtKB-UniRule"/>
</dbReference>
<dbReference type="GO" id="GO:0003723">
    <property type="term" value="F:RNA binding"/>
    <property type="evidence" value="ECO:0007669"/>
    <property type="project" value="InterPro"/>
</dbReference>
<dbReference type="GO" id="GO:0003968">
    <property type="term" value="F:RNA-directed RNA polymerase activity"/>
    <property type="evidence" value="ECO:0007669"/>
    <property type="project" value="UniProtKB-UniRule"/>
</dbReference>
<dbReference type="GO" id="GO:0006351">
    <property type="term" value="P:DNA-templated transcription"/>
    <property type="evidence" value="ECO:0007669"/>
    <property type="project" value="UniProtKB-UniRule"/>
</dbReference>
<dbReference type="GO" id="GO:0039657">
    <property type="term" value="P:symbiont-mediated suppression of host gene expression"/>
    <property type="evidence" value="ECO:0007669"/>
    <property type="project" value="UniProtKB-KW"/>
</dbReference>
<dbReference type="GO" id="GO:0039523">
    <property type="term" value="P:symbiont-mediated suppression of host mRNA transcription via inhibition of RNA polymerase II activity"/>
    <property type="evidence" value="ECO:0007669"/>
    <property type="project" value="UniProtKB-UniRule"/>
</dbReference>
<dbReference type="GO" id="GO:0039694">
    <property type="term" value="P:viral RNA genome replication"/>
    <property type="evidence" value="ECO:0007669"/>
    <property type="project" value="UniProtKB-UniRule"/>
</dbReference>
<dbReference type="GO" id="GO:0019083">
    <property type="term" value="P:viral transcription"/>
    <property type="evidence" value="ECO:0007669"/>
    <property type="project" value="UniProtKB-KW"/>
</dbReference>
<dbReference type="Gene3D" id="6.10.140.720">
    <property type="match status" value="1"/>
</dbReference>
<dbReference type="HAMAP" id="MF_04065">
    <property type="entry name" value="INFV_RDRP"/>
    <property type="match status" value="1"/>
</dbReference>
<dbReference type="InterPro" id="IPR007099">
    <property type="entry name" value="RNA-dir_pol_NSvirus"/>
</dbReference>
<dbReference type="InterPro" id="IPR001407">
    <property type="entry name" value="RNA_pol_PB1_influenza"/>
</dbReference>
<dbReference type="Pfam" id="PF00602">
    <property type="entry name" value="Flu_PB1"/>
    <property type="match status" value="1"/>
</dbReference>
<dbReference type="PIRSF" id="PIRSF000827">
    <property type="entry name" value="RdRPol_OMV"/>
    <property type="match status" value="1"/>
</dbReference>
<dbReference type="PROSITE" id="PS50525">
    <property type="entry name" value="RDRP_SSRNA_NEG_SEG"/>
    <property type="match status" value="1"/>
</dbReference>
<name>RDRP_INCJJ</name>
<keyword id="KW-1262">Eukaryotic host gene expression shutoff by virus</keyword>
<keyword id="KW-1191">Eukaryotic host transcription shutoff by virus</keyword>
<keyword id="KW-1035">Host cytoplasm</keyword>
<keyword id="KW-1190">Host gene expression shutoff by virus</keyword>
<keyword id="KW-1048">Host nucleus</keyword>
<keyword id="KW-0945">Host-virus interaction</keyword>
<keyword id="KW-1104">Inhibition of host RNA polymerase II by virus</keyword>
<keyword id="KW-0547">Nucleotide-binding</keyword>
<keyword id="KW-0548">Nucleotidyltransferase</keyword>
<keyword id="KW-0597">Phosphoprotein</keyword>
<keyword id="KW-0696">RNA-directed RNA polymerase</keyword>
<keyword id="KW-0808">Transferase</keyword>
<keyword id="KW-0693">Viral RNA replication</keyword>
<keyword id="KW-1195">Viral transcription</keyword>